<accession>P9WEV2</accession>
<proteinExistence type="evidence at protein level"/>
<protein>
    <recommendedName>
        <fullName evidence="9">Preaspterpenacid I synthase sttA</fullName>
    </recommendedName>
    <domain>
        <recommendedName>
            <fullName evidence="9">Sesterterpenoid synthase</fullName>
            <ecNumber evidence="7">4.2.3.-</ecNumber>
        </recommendedName>
    </domain>
    <domain>
        <recommendedName>
            <fullName evidence="9">Geranylfarnesyl diphosphate synthase</fullName>
            <shortName evidence="9">GFDP synthase</shortName>
            <ecNumber evidence="7">2.5.1.-</ecNumber>
        </recommendedName>
        <alternativeName>
            <fullName evidence="9">Aspterpenacid biosynthesis cluster protein sttA</fullName>
        </alternativeName>
        <alternativeName>
            <fullName evidence="8">Ophiobolin family sesterterpenoid biosynthesis cluster protein A</fullName>
        </alternativeName>
    </domain>
</protein>
<dbReference type="EC" id="4.2.3.-" evidence="7"/>
<dbReference type="EC" id="2.5.1.-" evidence="7"/>
<dbReference type="EMBL" id="KX449366">
    <property type="protein sequence ID" value="AQM58281.1"/>
    <property type="molecule type" value="Genomic_DNA"/>
</dbReference>
<dbReference type="SMR" id="P9WEV2"/>
<dbReference type="VEuPathDB" id="FungiDB:ATEG_03568"/>
<dbReference type="UniPathway" id="UPA00213"/>
<dbReference type="GO" id="GO:0004311">
    <property type="term" value="F:geranylgeranyl diphosphate synthase activity"/>
    <property type="evidence" value="ECO:0007669"/>
    <property type="project" value="UniProtKB-EC"/>
</dbReference>
<dbReference type="GO" id="GO:0016829">
    <property type="term" value="F:lyase activity"/>
    <property type="evidence" value="ECO:0007669"/>
    <property type="project" value="UniProtKB-KW"/>
</dbReference>
<dbReference type="GO" id="GO:0046872">
    <property type="term" value="F:metal ion binding"/>
    <property type="evidence" value="ECO:0007669"/>
    <property type="project" value="UniProtKB-KW"/>
</dbReference>
<dbReference type="GO" id="GO:0046165">
    <property type="term" value="P:alcohol biosynthetic process"/>
    <property type="evidence" value="ECO:0007669"/>
    <property type="project" value="UniProtKB-ARBA"/>
</dbReference>
<dbReference type="GO" id="GO:0043386">
    <property type="term" value="P:mycotoxin biosynthetic process"/>
    <property type="evidence" value="ECO:0007669"/>
    <property type="project" value="UniProtKB-ARBA"/>
</dbReference>
<dbReference type="GO" id="GO:0016114">
    <property type="term" value="P:terpenoid biosynthetic process"/>
    <property type="evidence" value="ECO:0007669"/>
    <property type="project" value="UniProtKB-UniPathway"/>
</dbReference>
<dbReference type="CDD" id="cd00685">
    <property type="entry name" value="Trans_IPPS_HT"/>
    <property type="match status" value="1"/>
</dbReference>
<dbReference type="Gene3D" id="1.10.600.10">
    <property type="entry name" value="Farnesyl Diphosphate Synthase"/>
    <property type="match status" value="2"/>
</dbReference>
<dbReference type="InterPro" id="IPR008949">
    <property type="entry name" value="Isoprenoid_synthase_dom_sf"/>
</dbReference>
<dbReference type="InterPro" id="IPR000092">
    <property type="entry name" value="Polyprenyl_synt"/>
</dbReference>
<dbReference type="InterPro" id="IPR033749">
    <property type="entry name" value="Polyprenyl_synt_CS"/>
</dbReference>
<dbReference type="PANTHER" id="PTHR12001">
    <property type="entry name" value="GERANYLGERANYL PYROPHOSPHATE SYNTHASE"/>
    <property type="match status" value="1"/>
</dbReference>
<dbReference type="PANTHER" id="PTHR12001:SF44">
    <property type="entry name" value="GERANYLGERANYL PYROPHOSPHATE SYNTHASE"/>
    <property type="match status" value="1"/>
</dbReference>
<dbReference type="Pfam" id="PF00348">
    <property type="entry name" value="polyprenyl_synt"/>
    <property type="match status" value="1"/>
</dbReference>
<dbReference type="Pfam" id="PF19086">
    <property type="entry name" value="Terpene_syn_C_2"/>
    <property type="match status" value="1"/>
</dbReference>
<dbReference type="SFLD" id="SFLDS00005">
    <property type="entry name" value="Isoprenoid_Synthase_Type_I"/>
    <property type="match status" value="1"/>
</dbReference>
<dbReference type="SUPFAM" id="SSF48576">
    <property type="entry name" value="Terpenoid synthases"/>
    <property type="match status" value="2"/>
</dbReference>
<dbReference type="PROSITE" id="PS00723">
    <property type="entry name" value="POLYPRENYL_SYNTHASE_1"/>
    <property type="match status" value="1"/>
</dbReference>
<reference key="1">
    <citation type="journal article" date="2017" name="Nat. Chem. Biol.">
        <title>A scalable platform to identify fungal secondary metabolites and their gene clusters.</title>
        <authorList>
            <person name="Clevenger K.D."/>
            <person name="Bok J.W."/>
            <person name="Ye R."/>
            <person name="Miley G.P."/>
            <person name="Verdan M.H."/>
            <person name="Velk T."/>
            <person name="Chen C."/>
            <person name="Yang K."/>
            <person name="Robey M.T."/>
            <person name="Gao P."/>
            <person name="Lamprecht M."/>
            <person name="Thomas P.M."/>
            <person name="Islam M.N."/>
            <person name="Palmer J.M."/>
            <person name="Wu C.C."/>
            <person name="Keller N.P."/>
            <person name="Kelleher N.L."/>
        </authorList>
    </citation>
    <scope>NUCLEOTIDE SEQUENCE [GENOMIC DNA]</scope>
    <scope>FUNCTION</scope>
    <scope>DISRUPTION PHENOTYPE</scope>
    <scope>PATHWAY</scope>
    <source>
        <strain>ATCC 20542 / MF4845</strain>
    </source>
</reference>
<reference key="2">
    <citation type="journal article" date="2021" name="Org. Lett.">
        <title>Genome-based discovery of enantiomeric pentacyclic sesterterpenes catalyzed by fungal bifunctional terpene synthases.</title>
        <authorList>
            <person name="Jiang L."/>
            <person name="Zhang X."/>
            <person name="Sato Y."/>
            <person name="Zhu G."/>
            <person name="Minami A."/>
            <person name="Zhang W."/>
            <person name="Ozaki T."/>
            <person name="Zhu B."/>
            <person name="Wang Z."/>
            <person name="Wang X."/>
            <person name="Lv K."/>
            <person name="Zhang J."/>
            <person name="Wang Y."/>
            <person name="Gao S."/>
            <person name="Liu C."/>
            <person name="Hsiang T."/>
            <person name="Zhang L."/>
            <person name="Oikawa H."/>
            <person name="Liu X."/>
        </authorList>
    </citation>
    <scope>FUNCTION</scope>
    <scope>CATALYTIC ACTIVITY</scope>
    <scope>PATHWAY</scope>
</reference>
<name>STTA_ASPTE</name>
<feature type="chain" id="PRO_0000450606" description="Preaspterpenacid I synthase sttA">
    <location>
        <begin position="1"/>
        <end position="778"/>
    </location>
</feature>
<feature type="region of interest" description="Sesterterpenoid synthase" evidence="2">
    <location>
        <begin position="4"/>
        <end position="359"/>
    </location>
</feature>
<feature type="region of interest" description="Substrate" evidence="1">
    <location>
        <begin position="211"/>
        <end position="214"/>
    </location>
</feature>
<feature type="region of interest" description="Substrate" evidence="1">
    <location>
        <begin position="259"/>
        <end position="263"/>
    </location>
</feature>
<feature type="region of interest" description="Substrate" evidence="1">
    <location>
        <begin position="350"/>
        <end position="351"/>
    </location>
</feature>
<feature type="region of interest" description="Geranylfarneyl diphosphate synthase" evidence="2">
    <location>
        <begin position="360"/>
        <end position="774"/>
    </location>
</feature>
<feature type="region of interest" description="Disordered" evidence="5">
    <location>
        <begin position="423"/>
        <end position="445"/>
    </location>
</feature>
<feature type="compositionally biased region" description="Polar residues" evidence="5">
    <location>
        <begin position="429"/>
        <end position="445"/>
    </location>
</feature>
<feature type="binding site" evidence="4">
    <location>
        <position position="105"/>
    </location>
    <ligand>
        <name>Mg(2+)</name>
        <dbReference type="ChEBI" id="CHEBI:18420"/>
        <label>1</label>
    </ligand>
</feature>
<feature type="binding site" evidence="4">
    <location>
        <position position="105"/>
    </location>
    <ligand>
        <name>Mg(2+)</name>
        <dbReference type="ChEBI" id="CHEBI:18420"/>
        <label>2</label>
    </ligand>
</feature>
<feature type="binding site" evidence="1">
    <location>
        <position position="105"/>
    </location>
    <ligand>
        <name>substrate</name>
    </ligand>
</feature>
<feature type="binding site" evidence="1">
    <location>
        <position position="255"/>
    </location>
    <ligand>
        <name>substrate</name>
    </ligand>
</feature>
<feature type="binding site" evidence="3">
    <location>
        <position position="493"/>
    </location>
    <ligand>
        <name>isopentenyl diphosphate</name>
        <dbReference type="ChEBI" id="CHEBI:128769"/>
    </ligand>
</feature>
<feature type="binding site" evidence="3">
    <location>
        <position position="496"/>
    </location>
    <ligand>
        <name>isopentenyl diphosphate</name>
        <dbReference type="ChEBI" id="CHEBI:128769"/>
    </ligand>
</feature>
<feature type="binding site" evidence="3">
    <location>
        <position position="525"/>
    </location>
    <ligand>
        <name>isopentenyl diphosphate</name>
        <dbReference type="ChEBI" id="CHEBI:128769"/>
    </ligand>
</feature>
<feature type="binding site" evidence="3">
    <location>
        <position position="532"/>
    </location>
    <ligand>
        <name>Mg(2+)</name>
        <dbReference type="ChEBI" id="CHEBI:18420"/>
        <label>3</label>
    </ligand>
</feature>
<feature type="binding site" evidence="3">
    <location>
        <position position="532"/>
    </location>
    <ligand>
        <name>Mg(2+)</name>
        <dbReference type="ChEBI" id="CHEBI:18420"/>
        <label>4</label>
    </ligand>
</feature>
<feature type="binding site" evidence="3">
    <location>
        <position position="536"/>
    </location>
    <ligand>
        <name>Mg(2+)</name>
        <dbReference type="ChEBI" id="CHEBI:18420"/>
        <label>3</label>
    </ligand>
</feature>
<feature type="binding site" evidence="3">
    <location>
        <position position="536"/>
    </location>
    <ligand>
        <name>Mg(2+)</name>
        <dbReference type="ChEBI" id="CHEBI:18420"/>
        <label>4</label>
    </ligand>
</feature>
<feature type="binding site" evidence="3">
    <location>
        <position position="541"/>
    </location>
    <ligand>
        <name>dimethylallyl diphosphate</name>
        <dbReference type="ChEBI" id="CHEBI:57623"/>
    </ligand>
</feature>
<feature type="binding site" evidence="3">
    <location>
        <position position="542"/>
    </location>
    <ligand>
        <name>isopentenyl diphosphate</name>
        <dbReference type="ChEBI" id="CHEBI:128769"/>
    </ligand>
</feature>
<feature type="binding site" evidence="3">
    <location>
        <position position="619"/>
    </location>
    <ligand>
        <name>dimethylallyl diphosphate</name>
        <dbReference type="ChEBI" id="CHEBI:57623"/>
    </ligand>
</feature>
<feature type="binding site" evidence="3">
    <location>
        <position position="620"/>
    </location>
    <ligand>
        <name>dimethylallyl diphosphate</name>
        <dbReference type="ChEBI" id="CHEBI:57623"/>
    </ligand>
</feature>
<feature type="binding site" evidence="3">
    <location>
        <position position="657"/>
    </location>
    <ligand>
        <name>dimethylallyl diphosphate</name>
        <dbReference type="ChEBI" id="CHEBI:57623"/>
    </ligand>
</feature>
<feature type="binding site" evidence="3">
    <location>
        <position position="664"/>
    </location>
    <ligand>
        <name>dimethylallyl diphosphate</name>
        <dbReference type="ChEBI" id="CHEBI:57623"/>
    </ligand>
</feature>
<feature type="binding site" evidence="3">
    <location>
        <position position="674"/>
    </location>
    <ligand>
        <name>dimethylallyl diphosphate</name>
        <dbReference type="ChEBI" id="CHEBI:57623"/>
    </ligand>
</feature>
<organism>
    <name type="scientific">Aspergillus terreus</name>
    <dbReference type="NCBI Taxonomy" id="33178"/>
    <lineage>
        <taxon>Eukaryota</taxon>
        <taxon>Fungi</taxon>
        <taxon>Dikarya</taxon>
        <taxon>Ascomycota</taxon>
        <taxon>Pezizomycotina</taxon>
        <taxon>Eurotiomycetes</taxon>
        <taxon>Eurotiomycetidae</taxon>
        <taxon>Eurotiales</taxon>
        <taxon>Aspergillaceae</taxon>
        <taxon>Aspergillus</taxon>
        <taxon>Aspergillus subgen. Circumdati</taxon>
    </lineage>
</organism>
<keyword id="KW-0414">Isoprene biosynthesis</keyword>
<keyword id="KW-0456">Lyase</keyword>
<keyword id="KW-0460">Magnesium</keyword>
<keyword id="KW-0479">Metal-binding</keyword>
<keyword id="KW-0511">Multifunctional enzyme</keyword>
<keyword id="KW-0808">Transferase</keyword>
<evidence type="ECO:0000250" key="1">
    <source>
        <dbReference type="UniProtKB" id="A2PZA5"/>
    </source>
</evidence>
<evidence type="ECO:0000250" key="2">
    <source>
        <dbReference type="UniProtKB" id="C9K2Q3"/>
    </source>
</evidence>
<evidence type="ECO:0000250" key="3">
    <source>
        <dbReference type="UniProtKB" id="Q12051"/>
    </source>
</evidence>
<evidence type="ECO:0000250" key="4">
    <source>
        <dbReference type="UniProtKB" id="Q40577"/>
    </source>
</evidence>
<evidence type="ECO:0000256" key="5">
    <source>
        <dbReference type="SAM" id="MobiDB-lite"/>
    </source>
</evidence>
<evidence type="ECO:0000269" key="6">
    <source>
    </source>
</evidence>
<evidence type="ECO:0000269" key="7">
    <source>
    </source>
</evidence>
<evidence type="ECO:0000303" key="8">
    <source>
    </source>
</evidence>
<evidence type="ECO:0000303" key="9">
    <source>
    </source>
</evidence>
<evidence type="ECO:0000305" key="10"/>
<evidence type="ECO:0000305" key="11">
    <source>
    </source>
</evidence>
<sequence>MDTISDVMKHCVPINYDDYDPLPADHFSTYPVFCSKATAEAIEASAEFTRKWKRACEVDGLHQDKLSFQACTTHLGHYNQWAYPDCVPERVSLNAVLSDCAFFWDGMSPVTGRSANVMITSPVDVSDSISAEKMNELTQDFGIAMLSELQSGRRIEPKFEINKMAVQVIRDFIAVDPFTGIGHLKEWKGHLDAQKKSTHNNMSWEKYVEHRVNESGGNWGISVGCWTNDIRISDEEKESVKYLTQLACAGGILGNDYYSFPKEFDEHHRSGTLDRIQNGVALLMREYGYTEEEAKEIIKKEVIIREKKWMDGFNAWSRQAGPETGEIRRYLVMTMALMSGSMFWMSHAGRYHRTDLATTAEDRATLIGKSRGALRVLEGYPPPKNLEGIVREPLASAVQDDNGHVQHEDAVADSSVRNGVHDAFKKSNPRNGKQNGTEGSKGTFTNGGYVQPAKLQQHCTSINSMAIYTAPFQEAAGDICDAPYGYIDSLPSKKNRNKLLDLLNDWLQVPPSSLKRIKNIVHMLHNSSLMLDDIEDASALRRGQPATHTFYGISQTINSANYIYVHVVDEVTRLYNPECINIFVDELRNLHRGQSLDLYWRHHARCPSMEEYIVMVDNKTGGLFRLMLRLLTAESSISRPFDTALSRLLTLTGRYYQIRDDYLNLASADYESKKGFCEDFDEGKFSLPLIHLLSHTRYPDRITSALFNRKPGTNLPYEMKRYILAEMEEVQTLAYSQDVLKYLHEELMHALDEAENRLGANDGVRMMLLGMGPKLLLC</sequence>
<gene>
    <name evidence="8" type="primary">sttA</name>
</gene>
<comment type="function">
    <text evidence="6 7 11">Sesterterpenoid synthase; part of the gene cluster that mediates the biosynthesis of aspterpenacids (PubMed:28604695, PubMed:34085529). Performs both prenyl transferase and terpene cyclase activity, converting isopentenyl diphosphate and dimethylallyl diphosphate into geranylfarnesyl diphosphate (GFPP) and then converting GFPP into preaspterpenacid I (PubMed:34085529). C22-oxidative modification of preaspterpenacid I by the cytochrome P450 monooxygenase sttB then leads to preaspterpenacid II. It has still to be determined how preaspterpenacid II is further modified to produce aspterpenacids (Probable).</text>
</comment>
<comment type="catalytic activity">
    <reaction evidence="7">
        <text>4 isopentenyl diphosphate + dimethylallyl diphosphate = (2E,6E,10E,14E)-geranylfarnesyl diphosphate + 4 diphosphate</text>
        <dbReference type="Rhea" id="RHEA:66860"/>
        <dbReference type="ChEBI" id="CHEBI:33019"/>
        <dbReference type="ChEBI" id="CHEBI:57623"/>
        <dbReference type="ChEBI" id="CHEBI:57907"/>
        <dbReference type="ChEBI" id="CHEBI:128769"/>
    </reaction>
    <physiologicalReaction direction="left-to-right" evidence="7">
        <dbReference type="Rhea" id="RHEA:66861"/>
    </physiologicalReaction>
</comment>
<comment type="catalytic activity">
    <reaction evidence="7">
        <text>(2E,6E,10E,14E)-geranylfarnesyl diphosphate + H2O = preaspterpenacid acid I + diphosphate</text>
        <dbReference type="Rhea" id="RHEA:71995"/>
        <dbReference type="ChEBI" id="CHEBI:15377"/>
        <dbReference type="ChEBI" id="CHEBI:33019"/>
        <dbReference type="ChEBI" id="CHEBI:57907"/>
        <dbReference type="ChEBI" id="CHEBI:191389"/>
    </reaction>
    <physiologicalReaction direction="left-to-right" evidence="7">
        <dbReference type="Rhea" id="RHEA:71996"/>
    </physiologicalReaction>
</comment>
<comment type="pathway">
    <text evidence="6 7">Secondary metabolite biosynthesis; terpenoid biosynthesis.</text>
</comment>
<comment type="disruption phenotype">
    <text evidence="6">Abolishes the production of the ophiobolin family sesterterpenoid.</text>
</comment>
<comment type="similarity">
    <text evidence="10">In the N-terminal section; belongs to the terpene synthase family.</text>
</comment>
<comment type="similarity">
    <text evidence="10">In the C-terminal section; belongs to the FPP/GGPP synthase family.</text>
</comment>